<accession>Q5QQ52</accession>
<accession>A8XS06</accession>
<accession>Q60ZC1</accession>
<proteinExistence type="evidence at transcript level"/>
<gene>
    <name evidence="8" type="primary">sqv-6</name>
    <name type="synonym">xt</name>
    <name evidence="8" type="ORF">CBG17882</name>
</gene>
<name>XYLT_CAEBR</name>
<feature type="chain" id="PRO_0000191412" description="Xylosyltransferase sqv-6">
    <location>
        <begin position="1"/>
        <end position="803"/>
    </location>
</feature>
<feature type="topological domain" description="Cytoplasmic" evidence="4">
    <location>
        <begin position="3"/>
        <end position="13"/>
    </location>
</feature>
<feature type="transmembrane region" description="Helical; Signal-anchor for type II membrane protein" evidence="4">
    <location>
        <begin position="14"/>
        <end position="34"/>
    </location>
</feature>
<feature type="topological domain" description="Lumenal" evidence="4">
    <location>
        <begin position="35"/>
        <end position="803"/>
    </location>
</feature>
<feature type="domain" description="WSC" evidence="5">
    <location>
        <begin position="115"/>
        <end position="209"/>
    </location>
</feature>
<feature type="binding site" evidence="2">
    <location>
        <position position="265"/>
    </location>
    <ligand>
        <name>UDP-alpha-D-xylose</name>
        <dbReference type="ChEBI" id="CHEBI:57632"/>
    </ligand>
</feature>
<feature type="binding site" evidence="2">
    <location>
        <begin position="294"/>
        <end position="296"/>
    </location>
    <ligand>
        <name>UDP-alpha-D-xylose</name>
        <dbReference type="ChEBI" id="CHEBI:57632"/>
    </ligand>
</feature>
<feature type="binding site" evidence="2">
    <location>
        <begin position="399"/>
        <end position="400"/>
    </location>
    <ligand>
        <name>UDP-alpha-D-xylose</name>
        <dbReference type="ChEBI" id="CHEBI:57632"/>
    </ligand>
</feature>
<feature type="binding site" evidence="2">
    <location>
        <position position="480"/>
    </location>
    <ligand>
        <name>UDP-alpha-D-xylose</name>
        <dbReference type="ChEBI" id="CHEBI:57632"/>
    </ligand>
</feature>
<feature type="binding site" evidence="2">
    <location>
        <begin position="506"/>
        <end position="507"/>
    </location>
    <ligand>
        <name>UDP-alpha-D-xylose</name>
        <dbReference type="ChEBI" id="CHEBI:57632"/>
    </ligand>
</feature>
<feature type="glycosylation site" description="N-linked (GlcNAc...) asparagine" evidence="4">
    <location>
        <position position="95"/>
    </location>
</feature>
<feature type="glycosylation site" description="N-linked (GlcNAc...) asparagine" evidence="4">
    <location>
        <position position="175"/>
    </location>
</feature>
<feature type="glycosylation site" description="N-linked (GlcNAc...) asparagine" evidence="4">
    <location>
        <position position="224"/>
    </location>
</feature>
<feature type="glycosylation site" description="N-linked (GlcNAc...) asparagine" evidence="4">
    <location>
        <position position="326"/>
    </location>
</feature>
<feature type="glycosylation site" description="N-linked (GlcNAc...) asparagine" evidence="4">
    <location>
        <position position="615"/>
    </location>
</feature>
<feature type="glycosylation site" description="N-linked (GlcNAc...) asparagine" evidence="4">
    <location>
        <position position="718"/>
    </location>
</feature>
<feature type="disulfide bond" evidence="2">
    <location>
        <begin position="63"/>
        <end position="91"/>
    </location>
</feature>
<feature type="disulfide bond" evidence="2">
    <location>
        <begin position="107"/>
        <end position="446"/>
    </location>
</feature>
<feature type="disulfide bond" evidence="2">
    <location>
        <begin position="465"/>
        <end position="479"/>
    </location>
</feature>
<feature type="disulfide bond" evidence="2">
    <location>
        <begin position="467"/>
        <end position="477"/>
    </location>
</feature>
<feature type="disulfide bond" evidence="2">
    <location>
        <begin position="769"/>
        <end position="775"/>
    </location>
</feature>
<keyword id="KW-1015">Disulfide bond</keyword>
<keyword id="KW-0256">Endoplasmic reticulum</keyword>
<keyword id="KW-0325">Glycoprotein</keyword>
<keyword id="KW-0328">Glycosyltransferase</keyword>
<keyword id="KW-0333">Golgi apparatus</keyword>
<keyword id="KW-0472">Membrane</keyword>
<keyword id="KW-0479">Metal-binding</keyword>
<keyword id="KW-1185">Reference proteome</keyword>
<keyword id="KW-0735">Signal-anchor</keyword>
<keyword id="KW-0808">Transferase</keyword>
<keyword id="KW-0812">Transmembrane</keyword>
<keyword id="KW-1133">Transmembrane helix</keyword>
<sequence length="803" mass="92745">MVVVGGVNTNYRHYALVIVLFFFLNVYLLYSAQNSVQIRKDEGETREKFQTPKVPLVDPISTCEIVDELAKSAISRATSPGCKSKLQLEACQLKNGTFSESFPQSTCSNHQDALIDQRIGCFLDKKDARVLKEFEYKFPQSNSKSTCRKNCYKAGFLYYGLEFGLECFCGNDVANATEIDSGECRNYKCPGAEDEFCGGFNAVEIFRTDKLVMLKPKYLPPAENVSKPPIKILFLLQLNGRNERQVKRFLKSIYLPNHYYYIHVDKRQNYMYSEMAKIAEKVPNIHITSTRYSTIWGGASLLQMFQQVIRDSMEIEMFKDWDYIFNFSESDFPILPIQDFERLITEHQGKSFLASHGYNTGKFIQKQGFEFVFSECDQRMFRIGKREFPENLRIDGGSDWVGIHRDLAEYSISNEELPQKLRKTFESILLPLESFYHTLAFNSKFCDDLMMSNLRLTNWLRKQGCRCASLKQIVDWCGCSPLVFREDTKIKFEMQKAISKPTYFARKFDSMVDIEAIESAEQQSMSTSKIQMDHPTYHFAYANIFKFGIDEEKIAHRSLASFALNTIKSHEKMAKIVQIDALRAHHNAQIEIVMKVETQSGANFEFLIHRKSHVNLSTSGALEVDGYVLKDVVYGTKFEWKEEICREYMGFVTEKDTLHTRLEWSPTERVKKNDKTSPEIEFQYRNGPEKIDKSIVKPYDSVFGGQFDSWDVGKRLSNLSTCPDFFVDVFSPSSSESPLATLRFSVYTEQNVDCHVAYLRDFFEIVDFCTSETACGEKIWSMSYPDPKSDIQVGWDEEARILR</sequence>
<protein>
    <recommendedName>
        <fullName>Xylosyltransferase sqv-6</fullName>
        <ecNumber evidence="3">2.4.2.26</ecNumber>
    </recommendedName>
    <alternativeName>
        <fullName>Peptide O-xylosyltransferase</fullName>
    </alternativeName>
    <alternativeName>
        <fullName>Squashed vulva protein 6</fullName>
    </alternativeName>
</protein>
<organism evidence="7">
    <name type="scientific">Caenorhabditis briggsae</name>
    <dbReference type="NCBI Taxonomy" id="6238"/>
    <lineage>
        <taxon>Eukaryota</taxon>
        <taxon>Metazoa</taxon>
        <taxon>Ecdysozoa</taxon>
        <taxon>Nematoda</taxon>
        <taxon>Chromadorea</taxon>
        <taxon>Rhabditida</taxon>
        <taxon>Rhabditina</taxon>
        <taxon>Rhabditomorpha</taxon>
        <taxon>Rhabditoidea</taxon>
        <taxon>Rhabditidae</taxon>
        <taxon>Peloderinae</taxon>
        <taxon>Caenorhabditis</taxon>
    </lineage>
</organism>
<evidence type="ECO:0000250" key="1"/>
<evidence type="ECO:0000250" key="2">
    <source>
        <dbReference type="UniProtKB" id="Q86Y38"/>
    </source>
</evidence>
<evidence type="ECO:0000250" key="3">
    <source>
        <dbReference type="UniProtKB" id="Q965Q8"/>
    </source>
</evidence>
<evidence type="ECO:0000255" key="4"/>
<evidence type="ECO:0000255" key="5">
    <source>
        <dbReference type="PROSITE-ProRule" id="PRU00558"/>
    </source>
</evidence>
<evidence type="ECO:0000305" key="6"/>
<evidence type="ECO:0000312" key="7">
    <source>
        <dbReference type="Proteomes" id="UP000008549"/>
    </source>
</evidence>
<evidence type="ECO:0000312" key="8">
    <source>
        <dbReference type="WormBase" id="CBG17882a"/>
    </source>
</evidence>
<reference key="1">
    <citation type="submission" date="2004-11" db="EMBL/GenBank/DDBJ databases">
        <title>Phylogeny of animal protein xylosyltransferases.</title>
        <authorList>
            <person name="Ouzzine M."/>
            <person name="Fournel-Gigleux S."/>
            <person name="Mollicone R."/>
            <person name="Oriol R."/>
        </authorList>
    </citation>
    <scope>NUCLEOTIDE SEQUENCE [MRNA]</scope>
</reference>
<reference key="2">
    <citation type="journal article" date="2003" name="PLoS Biol.">
        <title>The genome sequence of Caenorhabditis briggsae: a platform for comparative genomics.</title>
        <authorList>
            <person name="Stein L.D."/>
            <person name="Bao Z."/>
            <person name="Blasiar D."/>
            <person name="Blumenthal T."/>
            <person name="Brent M.R."/>
            <person name="Chen N."/>
            <person name="Chinwalla A."/>
            <person name="Clarke L."/>
            <person name="Clee C."/>
            <person name="Coghlan A."/>
            <person name="Coulson A."/>
            <person name="D'Eustachio P."/>
            <person name="Fitch D.H.A."/>
            <person name="Fulton L.A."/>
            <person name="Fulton R.E."/>
            <person name="Griffiths-Jones S."/>
            <person name="Harris T.W."/>
            <person name="Hillier L.W."/>
            <person name="Kamath R."/>
            <person name="Kuwabara P.E."/>
            <person name="Mardis E.R."/>
            <person name="Marra M.A."/>
            <person name="Miner T.L."/>
            <person name="Minx P."/>
            <person name="Mullikin J.C."/>
            <person name="Plumb R.W."/>
            <person name="Rogers J."/>
            <person name="Schein J.E."/>
            <person name="Sohrmann M."/>
            <person name="Spieth J."/>
            <person name="Stajich J.E."/>
            <person name="Wei C."/>
            <person name="Willey D."/>
            <person name="Wilson R.K."/>
            <person name="Durbin R.M."/>
            <person name="Waterston R.H."/>
        </authorList>
    </citation>
    <scope>NUCLEOTIDE SEQUENCE [LARGE SCALE GENOMIC DNA]</scope>
    <source>
        <strain>AF16</strain>
    </source>
</reference>
<dbReference type="EC" id="2.4.2.26" evidence="3"/>
<dbReference type="EMBL" id="AJ866723">
    <property type="protein sequence ID" value="CAI28926.1"/>
    <property type="molecule type" value="mRNA"/>
</dbReference>
<dbReference type="EMBL" id="HE601413">
    <property type="protein sequence ID" value="CAP35425.1"/>
    <property type="molecule type" value="Genomic_DNA"/>
</dbReference>
<dbReference type="SMR" id="Q5QQ52"/>
<dbReference type="FunCoup" id="Q5QQ52">
    <property type="interactions" value="783"/>
</dbReference>
<dbReference type="STRING" id="6238.Q5QQ52"/>
<dbReference type="CAZy" id="GT14">
    <property type="family name" value="Glycosyltransferase Family 14"/>
</dbReference>
<dbReference type="GlyCosmos" id="Q5QQ52">
    <property type="glycosylation" value="6 sites, No reported glycans"/>
</dbReference>
<dbReference type="EnsemblMetazoa" id="CBG17882a.1">
    <property type="protein sequence ID" value="CBG17882a.1"/>
    <property type="gene ID" value="WBGene00037395"/>
</dbReference>
<dbReference type="WormBase" id="CBG17882a">
    <property type="protein sequence ID" value="CBP37604"/>
    <property type="gene ID" value="WBGene00037395"/>
    <property type="gene designation" value="Cbr-sqv-6"/>
</dbReference>
<dbReference type="eggNOG" id="KOG0799">
    <property type="taxonomic scope" value="Eukaryota"/>
</dbReference>
<dbReference type="eggNOG" id="KOG4157">
    <property type="taxonomic scope" value="Eukaryota"/>
</dbReference>
<dbReference type="HOGENOM" id="CLU_012840_1_0_1"/>
<dbReference type="InParanoid" id="Q5QQ52"/>
<dbReference type="OMA" id="RMFRIGK"/>
<dbReference type="UniPathway" id="UPA00755"/>
<dbReference type="UniPathway" id="UPA00756"/>
<dbReference type="Proteomes" id="UP000008549">
    <property type="component" value="Unassembled WGS sequence"/>
</dbReference>
<dbReference type="GO" id="GO:0005789">
    <property type="term" value="C:endoplasmic reticulum membrane"/>
    <property type="evidence" value="ECO:0007669"/>
    <property type="project" value="UniProtKB-SubCell"/>
</dbReference>
<dbReference type="GO" id="GO:0000139">
    <property type="term" value="C:Golgi membrane"/>
    <property type="evidence" value="ECO:0007669"/>
    <property type="project" value="UniProtKB-SubCell"/>
</dbReference>
<dbReference type="GO" id="GO:0046872">
    <property type="term" value="F:metal ion binding"/>
    <property type="evidence" value="ECO:0007669"/>
    <property type="project" value="UniProtKB-KW"/>
</dbReference>
<dbReference type="GO" id="GO:0030158">
    <property type="term" value="F:protein xylosyltransferase activity"/>
    <property type="evidence" value="ECO:0000318"/>
    <property type="project" value="GO_Central"/>
</dbReference>
<dbReference type="GO" id="GO:0050650">
    <property type="term" value="P:chondroitin sulfate proteoglycan biosynthetic process"/>
    <property type="evidence" value="ECO:0000318"/>
    <property type="project" value="GO_Central"/>
</dbReference>
<dbReference type="GO" id="GO:0015012">
    <property type="term" value="P:heparan sulfate proteoglycan biosynthetic process"/>
    <property type="evidence" value="ECO:0000318"/>
    <property type="project" value="GO_Central"/>
</dbReference>
<dbReference type="InterPro" id="IPR003406">
    <property type="entry name" value="Glyco_trans_14"/>
</dbReference>
<dbReference type="InterPro" id="IPR002889">
    <property type="entry name" value="WSC_carb-bd"/>
</dbReference>
<dbReference type="InterPro" id="IPR043538">
    <property type="entry name" value="XYLT"/>
</dbReference>
<dbReference type="PANTHER" id="PTHR46025">
    <property type="entry name" value="XYLOSYLTRANSFERASE OXT"/>
    <property type="match status" value="1"/>
</dbReference>
<dbReference type="PANTHER" id="PTHR46025:SF3">
    <property type="entry name" value="XYLOSYLTRANSFERASE OXT"/>
    <property type="match status" value="1"/>
</dbReference>
<dbReference type="Pfam" id="PF02485">
    <property type="entry name" value="Branch"/>
    <property type="match status" value="1"/>
</dbReference>
<dbReference type="Pfam" id="PF01822">
    <property type="entry name" value="WSC"/>
    <property type="match status" value="1"/>
</dbReference>
<dbReference type="SMART" id="SM00321">
    <property type="entry name" value="WSC"/>
    <property type="match status" value="1"/>
</dbReference>
<dbReference type="PROSITE" id="PS51212">
    <property type="entry name" value="WSC"/>
    <property type="match status" value="1"/>
</dbReference>
<comment type="function">
    <text evidence="3">Catalyzes the first step in biosynthesis of glycosaminoglycan. Transfers D-xylose from UDP-D-xylose to specific serine residues of the core protein.</text>
</comment>
<comment type="catalytic activity">
    <reaction evidence="3">
        <text>UDP-alpha-D-xylose + L-seryl-[protein] = 3-O-(beta-D-xylosyl)-L-seryl-[protein] + UDP + H(+)</text>
        <dbReference type="Rhea" id="RHEA:50192"/>
        <dbReference type="Rhea" id="RHEA-COMP:9863"/>
        <dbReference type="Rhea" id="RHEA-COMP:12567"/>
        <dbReference type="ChEBI" id="CHEBI:15378"/>
        <dbReference type="ChEBI" id="CHEBI:29999"/>
        <dbReference type="ChEBI" id="CHEBI:57632"/>
        <dbReference type="ChEBI" id="CHEBI:58223"/>
        <dbReference type="ChEBI" id="CHEBI:132085"/>
        <dbReference type="EC" id="2.4.2.26"/>
    </reaction>
</comment>
<comment type="cofactor">
    <cofactor evidence="1">
        <name>a divalent metal cation</name>
        <dbReference type="ChEBI" id="CHEBI:60240"/>
    </cofactor>
</comment>
<comment type="pathway">
    <text>Glycan metabolism; chondroitin sulfate biosynthesis.</text>
</comment>
<comment type="pathway">
    <text>Glycan metabolism; heparan sulfate biosynthesis.</text>
</comment>
<comment type="subcellular location">
    <subcellularLocation>
        <location evidence="1">Endoplasmic reticulum membrane</location>
        <topology evidence="1">Single-pass type II membrane protein</topology>
    </subcellularLocation>
    <subcellularLocation>
        <location evidence="1">Golgi apparatus membrane</location>
        <topology evidence="1">Single-pass type II membrane protein</topology>
    </subcellularLocation>
</comment>
<comment type="similarity">
    <text evidence="6">Belongs to the glycosyltransferase 14 family. XylT subfamily.</text>
</comment>